<sequence length="228" mass="24345">MRRVILPLVMTVTLCLAQEASEACTKALTDCENDLECQNRLAPLMAACSTNTCQPQCRSAVLNVYQNKLGRILLRSDATCIPGRDELRTCNFLPAESTVHCSLGKLACEGDLQCNSKFGVFMSECEADAARGACTDKCKTLLNQTIETSVGSVFSNCTCTARDDQLCTNLKDNLLGVCLKNTPGVTLSPSDNSITDAPGGNDLADSSVGHGFNILSAISVYLLTVLVF</sequence>
<comment type="function">
    <text evidence="2">Role in pharynx function or development.</text>
</comment>
<comment type="subcellular location">
    <subcellularLocation>
        <location evidence="2">Cell membrane</location>
        <topology evidence="2">Lipid-anchor</topology>
        <topology evidence="2">GPI-anchor</topology>
    </subcellularLocation>
    <text>Localized on the muscle cell plasma membrane.</text>
</comment>
<comment type="tissue specificity">
    <text evidence="2">Pharynx muscle cells from its early formation, in the two-fold embryo, until the adult stage.</text>
</comment>
<comment type="developmental stage">
    <text evidence="2">All developmental stages, but not dauer larva.</text>
</comment>
<reference evidence="3" key="1">
    <citation type="journal article" date="2002" name="Biochim. Biophys. Acta">
        <title>Cloning and characterization of the C. elegans gas1 homolog: phas-1.</title>
        <authorList>
            <person name="Agostoni E."/>
            <person name="Gobessi S."/>
            <person name="Petrini E."/>
            <person name="Monte M."/>
            <person name="Schneider C."/>
        </authorList>
    </citation>
    <scope>NUCLEOTIDE SEQUENCE [GENOMIC DNA]</scope>
    <scope>FUNCTION</scope>
    <scope>SUBCELLULAR LOCATION</scope>
    <scope>TISSUE SPECIFICITY</scope>
    <scope>DEVELOPMENTAL STAGE</scope>
</reference>
<reference key="2">
    <citation type="journal article" date="1998" name="Science">
        <title>Genome sequence of the nematode C. elegans: a platform for investigating biology.</title>
        <authorList>
            <consortium name="The C. elegans sequencing consortium"/>
        </authorList>
    </citation>
    <scope>NUCLEOTIDE SEQUENCE [LARGE SCALE GENOMIC DNA]</scope>
    <source>
        <strain>Bristol N2</strain>
    </source>
</reference>
<protein>
    <recommendedName>
        <fullName>Growth arrest-specific protein 1 homolog</fullName>
    </recommendedName>
    <alternativeName>
        <fullName>Pharynx-associated gas1 homolog</fullName>
    </alternativeName>
</protein>
<gene>
    <name type="primary">phg-1</name>
    <name type="synonym">phas-1</name>
    <name type="ORF">F27E5.4</name>
</gene>
<name>GAS1_CAEEL</name>
<evidence type="ECO:0000255" key="1"/>
<evidence type="ECO:0000269" key="2">
    <source>
    </source>
</evidence>
<evidence type="ECO:0000305" key="3"/>
<evidence type="ECO:0000312" key="4">
    <source>
        <dbReference type="EMBL" id="CAA88466.2"/>
    </source>
</evidence>
<dbReference type="EMBL" id="Z48582">
    <property type="protein sequence ID" value="CAA88466.2"/>
    <property type="molecule type" value="Genomic_DNA"/>
</dbReference>
<dbReference type="PIR" id="T21458">
    <property type="entry name" value="T21458"/>
</dbReference>
<dbReference type="RefSeq" id="NP_496186.2">
    <property type="nucleotide sequence ID" value="NM_063785.4"/>
</dbReference>
<dbReference type="SMR" id="Q09553"/>
<dbReference type="FunCoup" id="Q09553">
    <property type="interactions" value="114"/>
</dbReference>
<dbReference type="STRING" id="6239.F27E5.4.1"/>
<dbReference type="GlyCosmos" id="Q09553">
    <property type="glycosylation" value="2 sites, No reported glycans"/>
</dbReference>
<dbReference type="PaxDb" id="6239-F27E5.4"/>
<dbReference type="PeptideAtlas" id="Q09553"/>
<dbReference type="EnsemblMetazoa" id="F27E5.4.1">
    <property type="protein sequence ID" value="F27E5.4.1"/>
    <property type="gene ID" value="WBGene00004017"/>
</dbReference>
<dbReference type="GeneID" id="185024"/>
<dbReference type="KEGG" id="cel:CELE_F27E5.4"/>
<dbReference type="UCSC" id="F27E5.4">
    <property type="organism name" value="c. elegans"/>
</dbReference>
<dbReference type="AGR" id="WB:WBGene00004017"/>
<dbReference type="CTD" id="185024"/>
<dbReference type="WormBase" id="F27E5.4">
    <property type="protein sequence ID" value="CE30964"/>
    <property type="gene ID" value="WBGene00004017"/>
    <property type="gene designation" value="phg-1"/>
</dbReference>
<dbReference type="eggNOG" id="ENOG502S2DN">
    <property type="taxonomic scope" value="Eukaryota"/>
</dbReference>
<dbReference type="HOGENOM" id="CLU_1215702_0_0_1"/>
<dbReference type="InParanoid" id="Q09553"/>
<dbReference type="OMA" id="YACASVI"/>
<dbReference type="OrthoDB" id="5776214at2759"/>
<dbReference type="PhylomeDB" id="Q09553"/>
<dbReference type="PRO" id="PR:Q09553"/>
<dbReference type="Proteomes" id="UP000001940">
    <property type="component" value="Chromosome II"/>
</dbReference>
<dbReference type="Bgee" id="WBGene00004017">
    <property type="expression patterns" value="Expressed in pharyngeal muscle cell (C elegans) and 3 other cell types or tissues"/>
</dbReference>
<dbReference type="GO" id="GO:0005886">
    <property type="term" value="C:plasma membrane"/>
    <property type="evidence" value="ECO:0000314"/>
    <property type="project" value="UniProtKB"/>
</dbReference>
<dbReference type="GO" id="GO:0098552">
    <property type="term" value="C:side of membrane"/>
    <property type="evidence" value="ECO:0007669"/>
    <property type="project" value="UniProtKB-KW"/>
</dbReference>
<dbReference type="GO" id="GO:1902807">
    <property type="term" value="P:negative regulation of cell cycle G1/S phase transition"/>
    <property type="evidence" value="ECO:0000315"/>
    <property type="project" value="UniProtKB"/>
</dbReference>
<dbReference type="InterPro" id="IPR016017">
    <property type="entry name" value="GDNF/GAS1"/>
</dbReference>
<dbReference type="Pfam" id="PF02351">
    <property type="entry name" value="GDNF"/>
    <property type="match status" value="1"/>
</dbReference>
<dbReference type="SMART" id="SM00907">
    <property type="entry name" value="GDNF"/>
    <property type="match status" value="2"/>
</dbReference>
<feature type="signal peptide" evidence="1">
    <location>
        <begin position="1"/>
        <end position="17"/>
    </location>
</feature>
<feature type="chain" id="PRO_0000021316" description="Growth arrest-specific protein 1 homolog">
    <location>
        <begin position="18"/>
        <end position="205"/>
    </location>
</feature>
<feature type="propeptide" id="PRO_0000021317" description="Removed in mature form" evidence="1">
    <location>
        <begin position="206"/>
        <end position="228"/>
    </location>
</feature>
<feature type="lipid moiety-binding region" description="GPI-anchor amidated aspartate" evidence="1">
    <location>
        <position position="205"/>
    </location>
</feature>
<feature type="glycosylation site" description="N-linked (GlcNAc...) asparagine" evidence="1">
    <location>
        <position position="143"/>
    </location>
</feature>
<feature type="glycosylation site" description="N-linked (GlcNAc...) asparagine" evidence="1">
    <location>
        <position position="156"/>
    </location>
</feature>
<keyword id="KW-1003">Cell membrane</keyword>
<keyword id="KW-0217">Developmental protein</keyword>
<keyword id="KW-0325">Glycoprotein</keyword>
<keyword id="KW-0336">GPI-anchor</keyword>
<keyword id="KW-0449">Lipoprotein</keyword>
<keyword id="KW-0472">Membrane</keyword>
<keyword id="KW-1185">Reference proteome</keyword>
<keyword id="KW-0732">Signal</keyword>
<accession>Q09553</accession>
<organism evidence="4">
    <name type="scientific">Caenorhabditis elegans</name>
    <dbReference type="NCBI Taxonomy" id="6239"/>
    <lineage>
        <taxon>Eukaryota</taxon>
        <taxon>Metazoa</taxon>
        <taxon>Ecdysozoa</taxon>
        <taxon>Nematoda</taxon>
        <taxon>Chromadorea</taxon>
        <taxon>Rhabditida</taxon>
        <taxon>Rhabditina</taxon>
        <taxon>Rhabditomorpha</taxon>
        <taxon>Rhabditoidea</taxon>
        <taxon>Rhabditidae</taxon>
        <taxon>Peloderinae</taxon>
        <taxon>Caenorhabditis</taxon>
    </lineage>
</organism>
<proteinExistence type="evidence at transcript level"/>